<organism>
    <name type="scientific">Anaeromyxobacter dehalogenans (strain 2CP-C)</name>
    <dbReference type="NCBI Taxonomy" id="290397"/>
    <lineage>
        <taxon>Bacteria</taxon>
        <taxon>Pseudomonadati</taxon>
        <taxon>Myxococcota</taxon>
        <taxon>Myxococcia</taxon>
        <taxon>Myxococcales</taxon>
        <taxon>Cystobacterineae</taxon>
        <taxon>Anaeromyxobacteraceae</taxon>
        <taxon>Anaeromyxobacter</taxon>
    </lineage>
</organism>
<feature type="chain" id="PRO_0000241307" description="Large ribosomal subunit protein uL3">
    <location>
        <begin position="1"/>
        <end position="236"/>
    </location>
</feature>
<evidence type="ECO:0000255" key="1">
    <source>
        <dbReference type="HAMAP-Rule" id="MF_01325"/>
    </source>
</evidence>
<evidence type="ECO:0000305" key="2"/>
<sequence length="236" mass="25580">MSTGLLAKKVGMTQIFTPEGDCVPVTVLEAGPCTVVRRKTAEKDGYDAVVIGFGVVDEKHAHRLSKPEVGVFKKAGTPIFRHVKEIRVKDAKLLGDLKAGDVLTVDKVFKANQRIDVAGVTKGRGFTGVMKRWNMKGAARDSSTAHEHHRHVGAIGQRKTPGKVWKGKHLPGHYGVDNITIQNLTVVGIEPEQNVLLVSGAVPGHADGLLFVNTAAKGQPRIKQKQEVRERAKPKV</sequence>
<accession>Q2IJD0</accession>
<comment type="function">
    <text evidence="1">One of the primary rRNA binding proteins, it binds directly near the 3'-end of the 23S rRNA, where it nucleates assembly of the 50S subunit.</text>
</comment>
<comment type="subunit">
    <text evidence="1">Part of the 50S ribosomal subunit. Forms a cluster with proteins L14 and L19.</text>
</comment>
<comment type="similarity">
    <text evidence="1">Belongs to the universal ribosomal protein uL3 family.</text>
</comment>
<gene>
    <name evidence="1" type="primary">rplC</name>
    <name type="ordered locus">Adeh_1988</name>
</gene>
<proteinExistence type="inferred from homology"/>
<dbReference type="EMBL" id="CP000251">
    <property type="protein sequence ID" value="ABC81759.1"/>
    <property type="molecule type" value="Genomic_DNA"/>
</dbReference>
<dbReference type="RefSeq" id="WP_011421041.1">
    <property type="nucleotide sequence ID" value="NC_007760.1"/>
</dbReference>
<dbReference type="SMR" id="Q2IJD0"/>
<dbReference type="STRING" id="290397.Adeh_1988"/>
<dbReference type="KEGG" id="ade:Adeh_1988"/>
<dbReference type="eggNOG" id="COG0087">
    <property type="taxonomic scope" value="Bacteria"/>
</dbReference>
<dbReference type="HOGENOM" id="CLU_044142_4_1_7"/>
<dbReference type="OrthoDB" id="9806135at2"/>
<dbReference type="Proteomes" id="UP000001935">
    <property type="component" value="Chromosome"/>
</dbReference>
<dbReference type="GO" id="GO:0022625">
    <property type="term" value="C:cytosolic large ribosomal subunit"/>
    <property type="evidence" value="ECO:0007669"/>
    <property type="project" value="TreeGrafter"/>
</dbReference>
<dbReference type="GO" id="GO:0019843">
    <property type="term" value="F:rRNA binding"/>
    <property type="evidence" value="ECO:0007669"/>
    <property type="project" value="UniProtKB-UniRule"/>
</dbReference>
<dbReference type="GO" id="GO:0003735">
    <property type="term" value="F:structural constituent of ribosome"/>
    <property type="evidence" value="ECO:0007669"/>
    <property type="project" value="InterPro"/>
</dbReference>
<dbReference type="GO" id="GO:0006412">
    <property type="term" value="P:translation"/>
    <property type="evidence" value="ECO:0007669"/>
    <property type="project" value="UniProtKB-UniRule"/>
</dbReference>
<dbReference type="FunFam" id="2.40.30.10:FF:000004">
    <property type="entry name" value="50S ribosomal protein L3"/>
    <property type="match status" value="1"/>
</dbReference>
<dbReference type="FunFam" id="3.30.160.810:FF:000001">
    <property type="entry name" value="50S ribosomal protein L3"/>
    <property type="match status" value="1"/>
</dbReference>
<dbReference type="Gene3D" id="3.30.160.810">
    <property type="match status" value="1"/>
</dbReference>
<dbReference type="Gene3D" id="2.40.30.10">
    <property type="entry name" value="Translation factors"/>
    <property type="match status" value="1"/>
</dbReference>
<dbReference type="HAMAP" id="MF_01325_B">
    <property type="entry name" value="Ribosomal_uL3_B"/>
    <property type="match status" value="1"/>
</dbReference>
<dbReference type="InterPro" id="IPR000597">
    <property type="entry name" value="Ribosomal_uL3"/>
</dbReference>
<dbReference type="InterPro" id="IPR019927">
    <property type="entry name" value="Ribosomal_uL3_bac/org-type"/>
</dbReference>
<dbReference type="InterPro" id="IPR019926">
    <property type="entry name" value="Ribosomal_uL3_CS"/>
</dbReference>
<dbReference type="InterPro" id="IPR009000">
    <property type="entry name" value="Transl_B-barrel_sf"/>
</dbReference>
<dbReference type="NCBIfam" id="TIGR03625">
    <property type="entry name" value="L3_bact"/>
    <property type="match status" value="1"/>
</dbReference>
<dbReference type="PANTHER" id="PTHR11229">
    <property type="entry name" value="50S RIBOSOMAL PROTEIN L3"/>
    <property type="match status" value="1"/>
</dbReference>
<dbReference type="PANTHER" id="PTHR11229:SF16">
    <property type="entry name" value="LARGE RIBOSOMAL SUBUNIT PROTEIN UL3C"/>
    <property type="match status" value="1"/>
</dbReference>
<dbReference type="Pfam" id="PF00297">
    <property type="entry name" value="Ribosomal_L3"/>
    <property type="match status" value="1"/>
</dbReference>
<dbReference type="SUPFAM" id="SSF50447">
    <property type="entry name" value="Translation proteins"/>
    <property type="match status" value="1"/>
</dbReference>
<dbReference type="PROSITE" id="PS00474">
    <property type="entry name" value="RIBOSOMAL_L3"/>
    <property type="match status" value="1"/>
</dbReference>
<name>RL3_ANADE</name>
<keyword id="KW-1185">Reference proteome</keyword>
<keyword id="KW-0687">Ribonucleoprotein</keyword>
<keyword id="KW-0689">Ribosomal protein</keyword>
<keyword id="KW-0694">RNA-binding</keyword>
<keyword id="KW-0699">rRNA-binding</keyword>
<protein>
    <recommendedName>
        <fullName evidence="1">Large ribosomal subunit protein uL3</fullName>
    </recommendedName>
    <alternativeName>
        <fullName evidence="2">50S ribosomal protein L3</fullName>
    </alternativeName>
</protein>
<reference key="1">
    <citation type="submission" date="2006-01" db="EMBL/GenBank/DDBJ databases">
        <title>Complete sequence of Anaeromyxobacter dehalogenans 2CP-C.</title>
        <authorList>
            <person name="Copeland A."/>
            <person name="Lucas S."/>
            <person name="Lapidus A."/>
            <person name="Barry K."/>
            <person name="Detter J.C."/>
            <person name="Glavina T."/>
            <person name="Hammon N."/>
            <person name="Israni S."/>
            <person name="Pitluck S."/>
            <person name="Brettin T."/>
            <person name="Bruce D."/>
            <person name="Han C."/>
            <person name="Tapia R."/>
            <person name="Gilna P."/>
            <person name="Kiss H."/>
            <person name="Schmutz J."/>
            <person name="Larimer F."/>
            <person name="Land M."/>
            <person name="Kyrpides N."/>
            <person name="Anderson I."/>
            <person name="Sanford R.A."/>
            <person name="Ritalahti K.M."/>
            <person name="Thomas H.S."/>
            <person name="Kirby J.R."/>
            <person name="Zhulin I.B."/>
            <person name="Loeffler F.E."/>
            <person name="Richardson P."/>
        </authorList>
    </citation>
    <scope>NUCLEOTIDE SEQUENCE [LARGE SCALE GENOMIC DNA]</scope>
    <source>
        <strain>2CP-C</strain>
    </source>
</reference>